<reference key="1">
    <citation type="journal article" date="1993" name="J. Gen. Virol.">
        <title>Identification of a new hepatitis B virus (HBV) genotype from Brazil that expresses HBV surface antigen subtype adw4.</title>
        <authorList>
            <person name="Naumann H."/>
            <person name="Schaefer S."/>
            <person name="Yoshida C.F.T."/>
            <person name="Gaspar A.M.C."/>
            <person name="Repp R."/>
            <person name="Gerlich W.H."/>
        </authorList>
    </citation>
    <scope>NUCLEOTIDE SEQUENCE [GENOMIC DNA]</scope>
</reference>
<reference key="2">
    <citation type="journal article" date="2007" name="World J. Gastroenterol.">
        <title>Hepatitis B virus replication.</title>
        <authorList>
            <person name="Beck J."/>
            <person name="Nassal M."/>
        </authorList>
    </citation>
    <scope>REVIEW</scope>
</reference>
<sequence>MPLSYPHFRKLLLLDDEAGPLEEELPRLADEDLNRRVAADLNLQLPNVSIPWTHKVGNFTGLYSSTVPAFNPNWSTPSFPDIHLHQDLISKCEQFVGPLTKNELRRLKLVMPARFYPKVTKYFPMDKGIKPYYPEHAVNHYFKTRHYLHTLWKAGILYKRESTRSASFCGSPYSWEQELQHGSTSLNDTKRHGTESLCAQSSGILSRPSAGSAIQSKFQQSRLGLQHKQGQLANGKQGRSGRLRSRVHTPTRWPAGVEPSSTRCVNNLASRSASCFHQSAVREKANPSLSTSKRHTSTGNAVELNPVPPSSVGSQGKGSVLPCWWLQFRDTEPCSDYCLSHIINLLEDWGPCYEHGQHYIRTPRTPARVTGGVFLVDKNPHNTTESRLVVDFSQFSRGTTRVSWPKFAVPNLQSLTNLLSSNLSWLSLDVSAAFYHLPLHPAAMPHLLVGSSGLSRYVARLSSTSRIHDHQHGTLQNLHNSCTRNLYVSLLLLFQTLGRKLHLYSHPIILGFRKIPMGVGLSPFLLAQFTSAICSVVRRAFPHCLAFSYMDDLVLGAKSVQHLESLYTAVTNFLLSVGIHLNTSKTKRWGYSLHFMGYVIGSWGSLPQDHIVHKIKECFRKLPVNRPIDWKVCQRIVGLLGFAAPFTQCGYPALMPLYACITAKQAFVFSPTYKAFLCKQYMNLYPVARQRPGLCQVFADATPTGWGLAIGHQRMRGTFVAPLPIHTAELLAACFARSRSGATLIGTDNSVVLSRKYTSFPWLLGCAANWILRGTSFVYVPSALNPADDPSRGRLGLYRPLLRLPFQPTTGRTSLYADSPSVPSHLPDRVHFASPLHVAWRPP</sequence>
<feature type="chain" id="PRO_0000222338" description="Protein P">
    <location>
        <begin position="1"/>
        <end position="843"/>
    </location>
</feature>
<feature type="domain" description="Reverse transcriptase" evidence="1">
    <location>
        <begin position="357"/>
        <end position="600"/>
    </location>
</feature>
<feature type="region of interest" description="Terminal protein domain (TP)" evidence="1">
    <location>
        <begin position="1"/>
        <end position="177"/>
    </location>
</feature>
<feature type="region of interest" description="Spacer" evidence="1">
    <location>
        <begin position="178"/>
        <end position="346"/>
    </location>
</feature>
<feature type="region of interest" description="Disordered" evidence="2">
    <location>
        <begin position="228"/>
        <end position="259"/>
    </location>
</feature>
<feature type="region of interest" description="Disordered" evidence="2">
    <location>
        <begin position="283"/>
        <end position="314"/>
    </location>
</feature>
<feature type="region of interest" description="Polymerase/reverse transcriptase domain (RT)" evidence="1">
    <location>
        <begin position="347"/>
        <end position="690"/>
    </location>
</feature>
<feature type="compositionally biased region" description="Basic residues" evidence="2">
    <location>
        <begin position="239"/>
        <end position="249"/>
    </location>
</feature>
<feature type="binding site" evidence="1">
    <location>
        <position position="429"/>
    </location>
    <ligand>
        <name>Mg(2+)</name>
        <dbReference type="ChEBI" id="CHEBI:18420"/>
        <note>catalytic</note>
    </ligand>
</feature>
<feature type="binding site" evidence="1">
    <location>
        <position position="551"/>
    </location>
    <ligand>
        <name>Mg(2+)</name>
        <dbReference type="ChEBI" id="CHEBI:18420"/>
        <note>catalytic</note>
    </ligand>
</feature>
<feature type="binding site" evidence="1">
    <location>
        <position position="552"/>
    </location>
    <ligand>
        <name>Mg(2+)</name>
        <dbReference type="ChEBI" id="CHEBI:18420"/>
        <note>catalytic</note>
    </ligand>
</feature>
<feature type="site" description="Priming of reverse-transcription by covalently linking the first nucleotide of the (-)DNA" evidence="1">
    <location>
        <position position="63"/>
    </location>
</feature>
<dbReference type="EC" id="2.7.7.7" evidence="1"/>
<dbReference type="EC" id="2.7.7.49" evidence="1"/>
<dbReference type="EC" id="3.1.26.4" evidence="1"/>
<dbReference type="EMBL" id="X69798">
    <property type="protein sequence ID" value="CAA49456.1"/>
    <property type="molecule type" value="Genomic_DNA"/>
</dbReference>
<dbReference type="PIR" id="JQ2229">
    <property type="entry name" value="JQ2229"/>
</dbReference>
<dbReference type="DrugBank" id="DB00709">
    <property type="generic name" value="Lamivudine"/>
</dbReference>
<dbReference type="DrugBank" id="DB01265">
    <property type="generic name" value="Telbivudine"/>
</dbReference>
<dbReference type="Proteomes" id="UP000008284">
    <property type="component" value="Segment"/>
</dbReference>
<dbReference type="GO" id="GO:0003677">
    <property type="term" value="F:DNA binding"/>
    <property type="evidence" value="ECO:0007669"/>
    <property type="project" value="UniProtKB-UniRule"/>
</dbReference>
<dbReference type="GO" id="GO:0003887">
    <property type="term" value="F:DNA-directed DNA polymerase activity"/>
    <property type="evidence" value="ECO:0007669"/>
    <property type="project" value="UniProtKB-UniRule"/>
</dbReference>
<dbReference type="GO" id="GO:0046872">
    <property type="term" value="F:metal ion binding"/>
    <property type="evidence" value="ECO:0007669"/>
    <property type="project" value="UniProtKB-UniRule"/>
</dbReference>
<dbReference type="GO" id="GO:0003964">
    <property type="term" value="F:RNA-directed DNA polymerase activity"/>
    <property type="evidence" value="ECO:0007669"/>
    <property type="project" value="UniProtKB-UniRule"/>
</dbReference>
<dbReference type="GO" id="GO:0004523">
    <property type="term" value="F:RNA-DNA hybrid ribonuclease activity"/>
    <property type="evidence" value="ECO:0007669"/>
    <property type="project" value="UniProtKB-UniRule"/>
</dbReference>
<dbReference type="GO" id="GO:0006260">
    <property type="term" value="P:DNA replication"/>
    <property type="evidence" value="ECO:0007669"/>
    <property type="project" value="UniProtKB-UniRule"/>
</dbReference>
<dbReference type="GO" id="GO:0052170">
    <property type="term" value="P:symbiont-mediated suppression of host innate immune response"/>
    <property type="evidence" value="ECO:0007669"/>
    <property type="project" value="UniProtKB-UniRule"/>
</dbReference>
<dbReference type="FunFam" id="3.30.70.270:FF:000009">
    <property type="entry name" value="Protein P"/>
    <property type="match status" value="1"/>
</dbReference>
<dbReference type="Gene3D" id="3.30.70.270">
    <property type="match status" value="1"/>
</dbReference>
<dbReference type="HAMAP" id="MF_04073">
    <property type="entry name" value="HBV_DPOL"/>
    <property type="match status" value="1"/>
</dbReference>
<dbReference type="InterPro" id="IPR043502">
    <property type="entry name" value="DNA/RNA_pol_sf"/>
</dbReference>
<dbReference type="InterPro" id="IPR001462">
    <property type="entry name" value="DNApol_viral_C"/>
</dbReference>
<dbReference type="InterPro" id="IPR000201">
    <property type="entry name" value="DNApol_viral_N"/>
</dbReference>
<dbReference type="InterPro" id="IPR037531">
    <property type="entry name" value="HBV_DPOL"/>
</dbReference>
<dbReference type="InterPro" id="IPR043128">
    <property type="entry name" value="Rev_trsase/Diguanyl_cyclase"/>
</dbReference>
<dbReference type="InterPro" id="IPR000477">
    <property type="entry name" value="RT_dom"/>
</dbReference>
<dbReference type="InterPro" id="IPR051320">
    <property type="entry name" value="Viral_Replic_Matur_Polypro"/>
</dbReference>
<dbReference type="PANTHER" id="PTHR33064:SF29">
    <property type="entry name" value="PEPTIDASE A2 DOMAIN-CONTAINING PROTEIN-RELATED"/>
    <property type="match status" value="1"/>
</dbReference>
<dbReference type="PANTHER" id="PTHR33064">
    <property type="entry name" value="POL PROTEIN"/>
    <property type="match status" value="1"/>
</dbReference>
<dbReference type="Pfam" id="PF00336">
    <property type="entry name" value="DNA_pol_viral_C"/>
    <property type="match status" value="1"/>
</dbReference>
<dbReference type="Pfam" id="PF00242">
    <property type="entry name" value="DNA_pol_viral_N"/>
    <property type="match status" value="1"/>
</dbReference>
<dbReference type="Pfam" id="PF00078">
    <property type="entry name" value="RVT_1"/>
    <property type="match status" value="1"/>
</dbReference>
<dbReference type="SUPFAM" id="SSF56672">
    <property type="entry name" value="DNA/RNA polymerases"/>
    <property type="match status" value="1"/>
</dbReference>
<dbReference type="PROSITE" id="PS50878">
    <property type="entry name" value="RT_POL"/>
    <property type="match status" value="1"/>
</dbReference>
<name>DPOL_HBVF1</name>
<gene>
    <name evidence="1" type="primary">P</name>
</gene>
<accession>Q05486</accession>
<keyword id="KW-0235">DNA replication</keyword>
<keyword id="KW-0238">DNA-binding</keyword>
<keyword id="KW-0239">DNA-directed DNA polymerase</keyword>
<keyword id="KW-0255">Endonuclease</keyword>
<keyword id="KW-0945">Host-virus interaction</keyword>
<keyword id="KW-0378">Hydrolase</keyword>
<keyword id="KW-1090">Inhibition of host innate immune response by virus</keyword>
<keyword id="KW-1113">Inhibition of host RLR pathway by virus</keyword>
<keyword id="KW-0460">Magnesium</keyword>
<keyword id="KW-0479">Metal-binding</keyword>
<keyword id="KW-0511">Multifunctional enzyme</keyword>
<keyword id="KW-0540">Nuclease</keyword>
<keyword id="KW-0548">Nucleotidyltransferase</keyword>
<keyword id="KW-0695">RNA-directed DNA polymerase</keyword>
<keyword id="KW-0808">Transferase</keyword>
<keyword id="KW-0899">Viral immunoevasion</keyword>
<organismHost>
    <name type="scientific">Homo sapiens</name>
    <name type="common">Human</name>
    <dbReference type="NCBI Taxonomy" id="9606"/>
</organismHost>
<organismHost>
    <name type="scientific">Pan troglodytes</name>
    <name type="common">Chimpanzee</name>
    <dbReference type="NCBI Taxonomy" id="9598"/>
</organismHost>
<protein>
    <recommendedName>
        <fullName evidence="1">Protein P</fullName>
    </recommendedName>
    <domain>
        <recommendedName>
            <fullName evidence="1">DNA-directed DNA polymerase</fullName>
            <ecNumber evidence="1">2.7.7.7</ecNumber>
        </recommendedName>
    </domain>
    <domain>
        <recommendedName>
            <fullName evidence="1">RNA-directed DNA polymerase</fullName>
            <ecNumber evidence="1">2.7.7.49</ecNumber>
        </recommendedName>
    </domain>
    <domain>
        <recommendedName>
            <fullName evidence="1">Ribonuclease H</fullName>
            <ecNumber evidence="1">3.1.26.4</ecNumber>
        </recommendedName>
    </domain>
</protein>
<organism>
    <name type="scientific">Hepatitis B virus genotype F2 (isolate Brazil/w4B)</name>
    <name type="common">HBV-F</name>
    <dbReference type="NCBI Taxonomy" id="45410"/>
    <lineage>
        <taxon>Viruses</taxon>
        <taxon>Riboviria</taxon>
        <taxon>Pararnavirae</taxon>
        <taxon>Artverviricota</taxon>
        <taxon>Revtraviricetes</taxon>
        <taxon>Blubervirales</taxon>
        <taxon>Hepadnaviridae</taxon>
        <taxon>Orthohepadnavirus</taxon>
        <taxon>Hepatitis B virus</taxon>
    </lineage>
</organism>
<proteinExistence type="inferred from homology"/>
<evidence type="ECO:0000255" key="1">
    <source>
        <dbReference type="HAMAP-Rule" id="MF_04073"/>
    </source>
</evidence>
<evidence type="ECO:0000256" key="2">
    <source>
        <dbReference type="SAM" id="MobiDB-lite"/>
    </source>
</evidence>
<comment type="function">
    <text evidence="1">Multifunctional enzyme that converts the viral RNA genome into dsDNA in viral cytoplasmic capsids. This enzyme displays a DNA polymerase activity that can copy either DNA or RNA templates, and a ribonuclease H (RNase H) activity that cleaves the RNA strand of RNA-DNA heteroduplexes in a partially processive 3'- to 5'-endonucleasic mode. Neo-synthesized pregenomic RNA (pgRNA) are encapsidated together with the P protein, and reverse-transcribed inside the nucleocapsid. Initiation of reverse-transcription occurs first by binding the epsilon loop on the pgRNA genome, and is initiated by protein priming, thereby the 5'-end of (-)DNA is covalently linked to P protein. Partial (+)DNA is synthesized from the (-)DNA template and generates the relaxed circular DNA (RC-DNA) genome. After budding and infection, the RC-DNA migrates in the nucleus, and is converted into a plasmid-like covalently closed circular DNA (cccDNA). The activity of P protein does not seem to be necessary for cccDNA generation, and is presumably released from (+)DNA by host nuclear DNA repair machinery.</text>
</comment>
<comment type="catalytic activity">
    <reaction evidence="1">
        <text>DNA(n) + a 2'-deoxyribonucleoside 5'-triphosphate = DNA(n+1) + diphosphate</text>
        <dbReference type="Rhea" id="RHEA:22508"/>
        <dbReference type="Rhea" id="RHEA-COMP:17339"/>
        <dbReference type="Rhea" id="RHEA-COMP:17340"/>
        <dbReference type="ChEBI" id="CHEBI:33019"/>
        <dbReference type="ChEBI" id="CHEBI:61560"/>
        <dbReference type="ChEBI" id="CHEBI:173112"/>
        <dbReference type="EC" id="2.7.7.7"/>
    </reaction>
</comment>
<comment type="catalytic activity">
    <reaction evidence="1">
        <text>DNA(n) + a 2'-deoxyribonucleoside 5'-triphosphate = DNA(n+1) + diphosphate</text>
        <dbReference type="Rhea" id="RHEA:22508"/>
        <dbReference type="Rhea" id="RHEA-COMP:17339"/>
        <dbReference type="Rhea" id="RHEA-COMP:17340"/>
        <dbReference type="ChEBI" id="CHEBI:33019"/>
        <dbReference type="ChEBI" id="CHEBI:61560"/>
        <dbReference type="ChEBI" id="CHEBI:173112"/>
        <dbReference type="EC" id="2.7.7.49"/>
    </reaction>
</comment>
<comment type="catalytic activity">
    <reaction evidence="1">
        <text>Endonucleolytic cleavage to 5'-phosphomonoester.</text>
        <dbReference type="EC" id="3.1.26.4"/>
    </reaction>
</comment>
<comment type="activity regulation">
    <text evidence="1">Activated by host HSP70 and HSP40 in vitro to be able to bind the epsilon loop of the pgRNA. Because deletion of the RNase H region renders the protein partly chaperone-independent, the chaperones may be needed indirectly to relieve occlusion of the RNA-binding site by this domain. Inhibited by several reverse-transcriptase inhibitors: Lamivudine, Adefovir and Entecavir.</text>
</comment>
<comment type="domain">
    <text evidence="1">Terminal protein domain (TP) is hepadnavirus-specific. Spacer domain is highly variable and separates the TP and RT domains. Polymerase/reverse-transcriptase domain (RT) and ribonuclease H domain (RH) are similar to retrovirus reverse transcriptase/RNase H.</text>
</comment>
<comment type="domain">
    <text evidence="1">The polymerase/reverse transcriptase (RT) and ribonuclease H (RH) domains are structured in five subdomains: finger, palm, thumb, connection and RNase H. Within the palm subdomain, the 'primer grip' region is thought to be involved in the positioning of the primer terminus for accommodating the incoming nucleotide. The RH domain stabilizes the association of RT with primer-template.</text>
</comment>
<comment type="miscellaneous">
    <text evidence="1">Hepadnaviral virions contain probably just one P protein molecule per particle.</text>
</comment>
<comment type="similarity">
    <text evidence="1">Belongs to the hepadnaviridae P protein family.</text>
</comment>